<dbReference type="EC" id="3.2.2.-"/>
<dbReference type="EC" id="4.2.99.18"/>
<dbReference type="EMBL" id="U88527">
    <property type="protein sequence ID" value="AAB68614.1"/>
    <property type="molecule type" value="mRNA"/>
</dbReference>
<dbReference type="EMBL" id="U88620">
    <property type="protein sequence ID" value="AAB68615.1"/>
    <property type="molecule type" value="mRNA"/>
</dbReference>
<dbReference type="EMBL" id="U96710">
    <property type="protein sequence ID" value="AAB81132.1"/>
    <property type="molecule type" value="mRNA"/>
</dbReference>
<dbReference type="EMBL" id="Y13277">
    <property type="protein sequence ID" value="CAA73726.1"/>
    <property type="molecule type" value="mRNA"/>
</dbReference>
<dbReference type="EMBL" id="Y11731">
    <property type="protein sequence ID" value="CAA72414.1"/>
    <property type="molecule type" value="mRNA"/>
</dbReference>
<dbReference type="EMBL" id="AF003595">
    <property type="protein sequence ID" value="AAB61340.1"/>
    <property type="molecule type" value="mRNA"/>
</dbReference>
<dbReference type="EMBL" id="AB000410">
    <property type="protein sequence ID" value="BAA19103.1"/>
    <property type="molecule type" value="mRNA"/>
</dbReference>
<dbReference type="EMBL" id="AF026691">
    <property type="protein sequence ID" value="AAB84013.1"/>
    <property type="status" value="ALT_INIT"/>
    <property type="molecule type" value="mRNA"/>
</dbReference>
<dbReference type="EMBL" id="Y11838">
    <property type="protein sequence ID" value="CAA72536.1"/>
    <property type="molecule type" value="mRNA"/>
</dbReference>
<dbReference type="EMBL" id="AJ131341">
    <property type="protein sequence ID" value="CAA10351.1"/>
    <property type="molecule type" value="Genomic_DNA"/>
</dbReference>
<dbReference type="EMBL" id="AF088282">
    <property type="protein sequence ID" value="AAD41680.1"/>
    <property type="molecule type" value="Genomic_DNA"/>
</dbReference>
<dbReference type="EMBL" id="AF088282">
    <property type="protein sequence ID" value="AAD41681.1"/>
    <property type="molecule type" value="Genomic_DNA"/>
</dbReference>
<dbReference type="EMBL" id="AF088282">
    <property type="protein sequence ID" value="AAD41682.1"/>
    <property type="molecule type" value="Genomic_DNA"/>
</dbReference>
<dbReference type="EMBL" id="AB019528">
    <property type="protein sequence ID" value="BAA76635.1"/>
    <property type="molecule type" value="mRNA"/>
</dbReference>
<dbReference type="EMBL" id="AB019529">
    <property type="protein sequence ID" value="BAA76636.1"/>
    <property type="molecule type" value="mRNA"/>
</dbReference>
<dbReference type="EMBL" id="AB019530">
    <property type="protein sequence ID" value="BAA76637.1"/>
    <property type="molecule type" value="mRNA"/>
</dbReference>
<dbReference type="EMBL" id="AB019531">
    <property type="protein sequence ID" value="BAA76638.1"/>
    <property type="molecule type" value="mRNA"/>
</dbReference>
<dbReference type="EMBL" id="AB019532">
    <property type="protein sequence ID" value="BAA76639.1"/>
    <property type="molecule type" value="mRNA"/>
</dbReference>
<dbReference type="EMBL" id="AK289858">
    <property type="protein sequence ID" value="BAF82547.1"/>
    <property type="molecule type" value="mRNA"/>
</dbReference>
<dbReference type="EMBL" id="AF521807">
    <property type="protein sequence ID" value="AAM74236.1"/>
    <property type="molecule type" value="Genomic_DNA"/>
</dbReference>
<dbReference type="EMBL" id="AC022382">
    <property type="status" value="NOT_ANNOTATED_CDS"/>
    <property type="molecule type" value="Genomic_DNA"/>
</dbReference>
<dbReference type="EMBL" id="BC000657">
    <property type="protein sequence ID" value="AAH00657.1"/>
    <property type="molecule type" value="mRNA"/>
</dbReference>
<dbReference type="CCDS" id="CCDS2576.1">
    <molecule id="O15527-4"/>
</dbReference>
<dbReference type="CCDS" id="CCDS2577.1">
    <molecule id="O15527-5"/>
</dbReference>
<dbReference type="CCDS" id="CCDS2578.1">
    <molecule id="O15527-6"/>
</dbReference>
<dbReference type="CCDS" id="CCDS2579.1">
    <molecule id="O15527-7"/>
</dbReference>
<dbReference type="CCDS" id="CCDS2580.1">
    <molecule id="O15527-3"/>
</dbReference>
<dbReference type="CCDS" id="CCDS2581.1">
    <molecule id="O15527-1"/>
</dbReference>
<dbReference type="CCDS" id="CCDS43046.1">
    <molecule id="O15527-2"/>
</dbReference>
<dbReference type="CCDS" id="CCDS46742.1">
    <molecule id="O15527-8"/>
</dbReference>
<dbReference type="PIR" id="T45069">
    <property type="entry name" value="T45069"/>
</dbReference>
<dbReference type="RefSeq" id="NP_002533.1">
    <molecule id="O15527-1"/>
    <property type="nucleotide sequence ID" value="NM_002542.6"/>
</dbReference>
<dbReference type="RefSeq" id="NP_058212.1">
    <molecule id="O15527-2"/>
    <property type="nucleotide sequence ID" value="NM_016819.4"/>
</dbReference>
<dbReference type="RefSeq" id="NP_058213.1">
    <molecule id="O15527-3"/>
    <property type="nucleotide sequence ID" value="NM_016820.4"/>
</dbReference>
<dbReference type="RefSeq" id="NP_058214.1">
    <molecule id="O15527-4"/>
    <property type="nucleotide sequence ID" value="NM_016821.3"/>
</dbReference>
<dbReference type="RefSeq" id="NP_058434.1">
    <molecule id="O15527-5"/>
    <property type="nucleotide sequence ID" value="NM_016826.3"/>
</dbReference>
<dbReference type="RefSeq" id="NP_058436.1">
    <molecule id="O15527-6"/>
    <property type="nucleotide sequence ID" value="NM_016827.3"/>
</dbReference>
<dbReference type="RefSeq" id="NP_058437.1">
    <molecule id="O15527-7"/>
    <property type="nucleotide sequence ID" value="NM_016828.3"/>
</dbReference>
<dbReference type="RefSeq" id="NP_058438.1">
    <molecule id="O15527-8"/>
    <property type="nucleotide sequence ID" value="NM_016829.3"/>
</dbReference>
<dbReference type="PDB" id="1EBM">
    <property type="method" value="X-ray"/>
    <property type="resolution" value="2.10 A"/>
    <property type="chains" value="A=12-325"/>
</dbReference>
<dbReference type="PDB" id="1FN7">
    <property type="method" value="X-ray"/>
    <property type="resolution" value="2.60 A"/>
    <property type="chains" value="A=12-325"/>
</dbReference>
<dbReference type="PDB" id="1HU0">
    <property type="method" value="X-ray"/>
    <property type="resolution" value="2.35 A"/>
    <property type="chains" value="A=12-327"/>
</dbReference>
<dbReference type="PDB" id="1KO9">
    <property type="method" value="X-ray"/>
    <property type="resolution" value="2.15 A"/>
    <property type="chains" value="A=1-345"/>
</dbReference>
<dbReference type="PDB" id="1LWV">
    <property type="method" value="X-ray"/>
    <property type="resolution" value="2.30 A"/>
    <property type="chains" value="A=12-327"/>
</dbReference>
<dbReference type="PDB" id="1LWW">
    <property type="method" value="X-ray"/>
    <property type="resolution" value="2.10 A"/>
    <property type="chains" value="A=12-327"/>
</dbReference>
<dbReference type="PDB" id="1LWY">
    <property type="method" value="X-ray"/>
    <property type="resolution" value="2.01 A"/>
    <property type="chains" value="A=12-327"/>
</dbReference>
<dbReference type="PDB" id="1M3H">
    <property type="method" value="X-ray"/>
    <property type="resolution" value="2.05 A"/>
    <property type="chains" value="A=12-325"/>
</dbReference>
<dbReference type="PDB" id="1M3Q">
    <property type="method" value="X-ray"/>
    <property type="resolution" value="1.90 A"/>
    <property type="chains" value="A=12-325"/>
</dbReference>
<dbReference type="PDB" id="1N39">
    <property type="method" value="X-ray"/>
    <property type="resolution" value="2.20 A"/>
    <property type="chains" value="A=12-325"/>
</dbReference>
<dbReference type="PDB" id="1N3A">
    <property type="method" value="X-ray"/>
    <property type="resolution" value="2.20 A"/>
    <property type="chains" value="A=12-325"/>
</dbReference>
<dbReference type="PDB" id="1N3C">
    <property type="method" value="X-ray"/>
    <property type="resolution" value="2.70 A"/>
    <property type="chains" value="A=12-325"/>
</dbReference>
<dbReference type="PDB" id="1YQK">
    <property type="method" value="X-ray"/>
    <property type="resolution" value="2.50 A"/>
    <property type="chains" value="A=12-327"/>
</dbReference>
<dbReference type="PDB" id="1YQL">
    <property type="method" value="X-ray"/>
    <property type="resolution" value="2.60 A"/>
    <property type="chains" value="A=12-327"/>
</dbReference>
<dbReference type="PDB" id="1YQM">
    <property type="method" value="X-ray"/>
    <property type="resolution" value="2.50 A"/>
    <property type="chains" value="A=12-327"/>
</dbReference>
<dbReference type="PDB" id="1YQR">
    <property type="method" value="X-ray"/>
    <property type="resolution" value="2.43 A"/>
    <property type="chains" value="A=12-327"/>
</dbReference>
<dbReference type="PDB" id="2I5W">
    <property type="method" value="X-ray"/>
    <property type="resolution" value="2.60 A"/>
    <property type="chains" value="A=12-323"/>
</dbReference>
<dbReference type="PDB" id="2NOB">
    <property type="method" value="X-ray"/>
    <property type="resolution" value="2.10 A"/>
    <property type="chains" value="A=12-327"/>
</dbReference>
<dbReference type="PDB" id="2NOE">
    <property type="method" value="X-ray"/>
    <property type="resolution" value="2.20 A"/>
    <property type="chains" value="A=12-327"/>
</dbReference>
<dbReference type="PDB" id="2NOF">
    <property type="method" value="X-ray"/>
    <property type="resolution" value="2.35 A"/>
    <property type="chains" value="A=12-327"/>
</dbReference>
<dbReference type="PDB" id="2NOH">
    <property type="method" value="X-ray"/>
    <property type="resolution" value="2.01 A"/>
    <property type="chains" value="A=12-327"/>
</dbReference>
<dbReference type="PDB" id="2NOI">
    <property type="method" value="X-ray"/>
    <property type="resolution" value="2.35 A"/>
    <property type="chains" value="A=12-327"/>
</dbReference>
<dbReference type="PDB" id="2NOL">
    <property type="method" value="X-ray"/>
    <property type="resolution" value="2.57 A"/>
    <property type="chains" value="A=12-327"/>
</dbReference>
<dbReference type="PDB" id="2NOZ">
    <property type="method" value="X-ray"/>
    <property type="resolution" value="2.43 A"/>
    <property type="chains" value="A=12-327"/>
</dbReference>
<dbReference type="PDB" id="2XHI">
    <property type="method" value="X-ray"/>
    <property type="resolution" value="1.55 A"/>
    <property type="chains" value="A=1-345"/>
</dbReference>
<dbReference type="PDB" id="3IH7">
    <property type="method" value="X-ray"/>
    <property type="resolution" value="3.10 A"/>
    <property type="chains" value="A=12-325"/>
</dbReference>
<dbReference type="PDB" id="3KTU">
    <property type="method" value="X-ray"/>
    <property type="resolution" value="2.30 A"/>
    <property type="chains" value="A=12-325"/>
</dbReference>
<dbReference type="PDB" id="5AN4">
    <property type="method" value="X-ray"/>
    <property type="resolution" value="1.60 A"/>
    <property type="chains" value="A=12-323"/>
</dbReference>
<dbReference type="PDB" id="6RLW">
    <property type="method" value="X-ray"/>
    <property type="resolution" value="2.00 A"/>
    <property type="chains" value="AAA/BBB/CCC/DDD/EEE=11-327"/>
</dbReference>
<dbReference type="PDB" id="6W0M">
    <property type="method" value="X-ray"/>
    <property type="resolution" value="2.37 A"/>
    <property type="chains" value="A=12-325"/>
</dbReference>
<dbReference type="PDB" id="6W0R">
    <property type="method" value="X-ray"/>
    <property type="resolution" value="2.35 A"/>
    <property type="chains" value="A=12-323"/>
</dbReference>
<dbReference type="PDB" id="6W13">
    <property type="method" value="X-ray"/>
    <property type="resolution" value="2.38 A"/>
    <property type="chains" value="A=12-325"/>
</dbReference>
<dbReference type="PDB" id="7AYY">
    <property type="method" value="X-ray"/>
    <property type="resolution" value="2.00 A"/>
    <property type="chains" value="AAA/BBB/CCC/DDD/EEE=11-327"/>
</dbReference>
<dbReference type="PDB" id="8VWT">
    <property type="method" value="EM"/>
    <property type="resolution" value="3.30 A"/>
    <property type="chains" value="K=1-345"/>
</dbReference>
<dbReference type="PDB" id="8VWV">
    <property type="method" value="EM"/>
    <property type="resolution" value="3.60 A"/>
    <property type="chains" value="K=1-345"/>
</dbReference>
<dbReference type="PDB" id="8VX4">
    <property type="method" value="EM"/>
    <property type="resolution" value="3.70 A"/>
    <property type="chains" value="A=2-345"/>
</dbReference>
<dbReference type="PDB" id="8VX6">
    <property type="method" value="EM"/>
    <property type="resolution" value="3.20 A"/>
    <property type="chains" value="K=2-345"/>
</dbReference>
<dbReference type="PDB" id="9EOZ">
    <property type="method" value="EM"/>
    <property type="resolution" value="3.10 A"/>
    <property type="chains" value="A=2-345"/>
</dbReference>
<dbReference type="PDBsum" id="1EBM"/>
<dbReference type="PDBsum" id="1FN7"/>
<dbReference type="PDBsum" id="1HU0"/>
<dbReference type="PDBsum" id="1KO9"/>
<dbReference type="PDBsum" id="1LWV"/>
<dbReference type="PDBsum" id="1LWW"/>
<dbReference type="PDBsum" id="1LWY"/>
<dbReference type="PDBsum" id="1M3H"/>
<dbReference type="PDBsum" id="1M3Q"/>
<dbReference type="PDBsum" id="1N39"/>
<dbReference type="PDBsum" id="1N3A"/>
<dbReference type="PDBsum" id="1N3C"/>
<dbReference type="PDBsum" id="1YQK"/>
<dbReference type="PDBsum" id="1YQL"/>
<dbReference type="PDBsum" id="1YQM"/>
<dbReference type="PDBsum" id="1YQR"/>
<dbReference type="PDBsum" id="2I5W"/>
<dbReference type="PDBsum" id="2NOB"/>
<dbReference type="PDBsum" id="2NOE"/>
<dbReference type="PDBsum" id="2NOF"/>
<dbReference type="PDBsum" id="2NOH"/>
<dbReference type="PDBsum" id="2NOI"/>
<dbReference type="PDBsum" id="2NOL"/>
<dbReference type="PDBsum" id="2NOZ"/>
<dbReference type="PDBsum" id="2XHI"/>
<dbReference type="PDBsum" id="3IH7"/>
<dbReference type="PDBsum" id="3KTU"/>
<dbReference type="PDBsum" id="5AN4"/>
<dbReference type="PDBsum" id="6RLW"/>
<dbReference type="PDBsum" id="6W0M"/>
<dbReference type="PDBsum" id="6W0R"/>
<dbReference type="PDBsum" id="6W13"/>
<dbReference type="PDBsum" id="7AYY"/>
<dbReference type="PDBsum" id="8VWT"/>
<dbReference type="PDBsum" id="8VWV"/>
<dbReference type="PDBsum" id="8VX4"/>
<dbReference type="PDBsum" id="8VX6"/>
<dbReference type="PDBsum" id="9EOZ"/>
<dbReference type="EMDB" id="EMD-19870"/>
<dbReference type="EMDB" id="EMD-43596"/>
<dbReference type="EMDB" id="EMD-43601"/>
<dbReference type="EMDB" id="EMD-43607"/>
<dbReference type="EMDB" id="EMD-43609"/>
<dbReference type="SMR" id="O15527"/>
<dbReference type="BioGRID" id="111018">
    <property type="interactions" value="16"/>
</dbReference>
<dbReference type="CORUM" id="O15527"/>
<dbReference type="FunCoup" id="O15527">
    <property type="interactions" value="3020"/>
</dbReference>
<dbReference type="IntAct" id="O15527">
    <property type="interactions" value="7"/>
</dbReference>
<dbReference type="MINT" id="O15527"/>
<dbReference type="STRING" id="9606.ENSP00000306561"/>
<dbReference type="BindingDB" id="O15527"/>
<dbReference type="ChEMBL" id="CHEMBL3396944"/>
<dbReference type="GlyGen" id="O15527">
    <property type="glycosylation" value="3 sites"/>
</dbReference>
<dbReference type="iPTMnet" id="O15527"/>
<dbReference type="PhosphoSitePlus" id="O15527"/>
<dbReference type="BioMuta" id="OGG1"/>
<dbReference type="jPOST" id="O15527"/>
<dbReference type="MassIVE" id="O15527"/>
<dbReference type="PaxDb" id="9606-ENSP00000306561"/>
<dbReference type="PeptideAtlas" id="O15527"/>
<dbReference type="ProteomicsDB" id="48726">
    <molecule id="O15527-1"/>
</dbReference>
<dbReference type="ProteomicsDB" id="48727">
    <molecule id="O15527-2"/>
</dbReference>
<dbReference type="ProteomicsDB" id="48728">
    <molecule id="O15527-3"/>
</dbReference>
<dbReference type="ProteomicsDB" id="48729">
    <molecule id="O15527-4"/>
</dbReference>
<dbReference type="ProteomicsDB" id="48730">
    <molecule id="O15527-5"/>
</dbReference>
<dbReference type="ProteomicsDB" id="48731">
    <molecule id="O15527-6"/>
</dbReference>
<dbReference type="ProteomicsDB" id="48732">
    <molecule id="O15527-7"/>
</dbReference>
<dbReference type="ProteomicsDB" id="48733">
    <molecule id="O15527-8"/>
</dbReference>
<dbReference type="Pumba" id="O15527"/>
<dbReference type="Antibodypedia" id="25518">
    <property type="antibodies" value="483 antibodies from 38 providers"/>
</dbReference>
<dbReference type="CPTC" id="O15527">
    <property type="antibodies" value="1 antibody"/>
</dbReference>
<dbReference type="DNASU" id="4968"/>
<dbReference type="Ensembl" id="ENST00000302003.11">
    <molecule id="O15527-3"/>
    <property type="protein sequence ID" value="ENSP00000305584.7"/>
    <property type="gene ID" value="ENSG00000114026.22"/>
</dbReference>
<dbReference type="Ensembl" id="ENST00000302008.12">
    <molecule id="O15527-7"/>
    <property type="protein sequence ID" value="ENSP00000305527.8"/>
    <property type="gene ID" value="ENSG00000114026.22"/>
</dbReference>
<dbReference type="Ensembl" id="ENST00000302036.12">
    <molecule id="O15527-4"/>
    <property type="protein sequence ID" value="ENSP00000306561.7"/>
    <property type="gene ID" value="ENSG00000114026.22"/>
</dbReference>
<dbReference type="Ensembl" id="ENST00000339511.9">
    <molecule id="O15527-2"/>
    <property type="protein sequence ID" value="ENSP00000345520.5"/>
    <property type="gene ID" value="ENSG00000114026.22"/>
</dbReference>
<dbReference type="Ensembl" id="ENST00000344629.12">
    <molecule id="O15527-1"/>
    <property type="protein sequence ID" value="ENSP00000342851.7"/>
    <property type="gene ID" value="ENSG00000114026.22"/>
</dbReference>
<dbReference type="Ensembl" id="ENST00000352937.6">
    <molecule id="O15527-5"/>
    <property type="protein sequence ID" value="ENSP00000344899.6"/>
    <property type="gene ID" value="ENSG00000114026.22"/>
</dbReference>
<dbReference type="Ensembl" id="ENST00000383826.9">
    <molecule id="O15527-6"/>
    <property type="protein sequence ID" value="ENSP00000373337.5"/>
    <property type="gene ID" value="ENSG00000114026.22"/>
</dbReference>
<dbReference type="Ensembl" id="ENST00000449570.6">
    <molecule id="O15527-8"/>
    <property type="protein sequence ID" value="ENSP00000403598.2"/>
    <property type="gene ID" value="ENSG00000114026.22"/>
</dbReference>
<dbReference type="GeneID" id="4968"/>
<dbReference type="KEGG" id="hsa:4968"/>
<dbReference type="MANE-Select" id="ENST00000344629.12">
    <property type="protein sequence ID" value="ENSP00000342851.7"/>
    <property type="RefSeq nucleotide sequence ID" value="NM_002542.6"/>
    <property type="RefSeq protein sequence ID" value="NP_002533.1"/>
</dbReference>
<dbReference type="UCSC" id="uc003bsh.4">
    <molecule id="O15527-1"/>
    <property type="organism name" value="human"/>
</dbReference>
<dbReference type="AGR" id="HGNC:8125"/>
<dbReference type="CTD" id="4968"/>
<dbReference type="DisGeNET" id="4968"/>
<dbReference type="GeneCards" id="OGG1"/>
<dbReference type="HGNC" id="HGNC:8125">
    <property type="gene designation" value="OGG1"/>
</dbReference>
<dbReference type="HPA" id="ENSG00000114026">
    <property type="expression patterns" value="Low tissue specificity"/>
</dbReference>
<dbReference type="MalaCards" id="OGG1"/>
<dbReference type="MIM" id="144700">
    <property type="type" value="phenotype"/>
</dbReference>
<dbReference type="MIM" id="601982">
    <property type="type" value="gene"/>
</dbReference>
<dbReference type="neXtProt" id="NX_O15527"/>
<dbReference type="OpenTargets" id="ENSG00000114026"/>
<dbReference type="Orphanet" id="422526">
    <property type="disease" value="Hereditary clear cell renal cell carcinoma"/>
</dbReference>
<dbReference type="PharmGKB" id="PA31912"/>
<dbReference type="VEuPathDB" id="HostDB:ENSG00000114026"/>
<dbReference type="eggNOG" id="KOG2875">
    <property type="taxonomic scope" value="Eukaryota"/>
</dbReference>
<dbReference type="GeneTree" id="ENSGT00640000091554"/>
<dbReference type="HOGENOM" id="CLU_027543_1_1_1"/>
<dbReference type="InParanoid" id="O15527"/>
<dbReference type="OMA" id="GYAQEYL"/>
<dbReference type="OrthoDB" id="238681at2759"/>
<dbReference type="PAN-GO" id="O15527">
    <property type="GO annotations" value="3 GO annotations based on evolutionary models"/>
</dbReference>
<dbReference type="PhylomeDB" id="O15527"/>
<dbReference type="TreeFam" id="TF323702"/>
<dbReference type="BRENDA" id="3.2.2.23">
    <property type="organism ID" value="2681"/>
</dbReference>
<dbReference type="BRENDA" id="4.2.99.18">
    <property type="organism ID" value="2681"/>
</dbReference>
<dbReference type="PathwayCommons" id="O15527"/>
<dbReference type="Reactome" id="R-HSA-110328">
    <property type="pathway name" value="Recognition and association of DNA glycosylase with site containing an affected pyrimidine"/>
</dbReference>
<dbReference type="Reactome" id="R-HSA-110329">
    <property type="pathway name" value="Cleavage of the damaged pyrimidine"/>
</dbReference>
<dbReference type="Reactome" id="R-HSA-110330">
    <property type="pathway name" value="Recognition and association of DNA glycosylase with site containing an affected purine"/>
</dbReference>
<dbReference type="Reactome" id="R-HSA-110331">
    <property type="pathway name" value="Cleavage of the damaged purine"/>
</dbReference>
<dbReference type="Reactome" id="R-HSA-110357">
    <property type="pathway name" value="Displacement of DNA glycosylase by APEX1"/>
</dbReference>
<dbReference type="Reactome" id="R-HSA-5649702">
    <property type="pathway name" value="APEX1-Independent Resolution of AP Sites via the Single Nucleotide Replacement Pathway"/>
</dbReference>
<dbReference type="Reactome" id="R-HSA-9656255">
    <property type="pathway name" value="Defective OGG1 Substrate Binding"/>
</dbReference>
<dbReference type="Reactome" id="R-HSA-9656256">
    <property type="pathway name" value="Defective OGG1 Substrate Processing"/>
</dbReference>
<dbReference type="Reactome" id="R-HSA-9657050">
    <molecule id="O15527-4"/>
    <property type="pathway name" value="Defective OGG1 Localization"/>
</dbReference>
<dbReference type="SignaLink" id="O15527"/>
<dbReference type="SIGNOR" id="O15527"/>
<dbReference type="BioGRID-ORCS" id="4968">
    <property type="hits" value="19 hits in 1165 CRISPR screens"/>
</dbReference>
<dbReference type="CD-CODE" id="804901D1">
    <property type="entry name" value="Nuclear speckle"/>
</dbReference>
<dbReference type="CD-CODE" id="8C2F96ED">
    <property type="entry name" value="Centrosome"/>
</dbReference>
<dbReference type="CD-CODE" id="DEE660B4">
    <property type="entry name" value="Stress granule"/>
</dbReference>
<dbReference type="ChiTaRS" id="OGG1">
    <property type="organism name" value="human"/>
</dbReference>
<dbReference type="EvolutionaryTrace" id="O15527"/>
<dbReference type="GeneWiki" id="Oxoguanine_glycosylase"/>
<dbReference type="GenomeRNAi" id="4968"/>
<dbReference type="Pharos" id="O15527">
    <property type="development level" value="Tchem"/>
</dbReference>
<dbReference type="PRO" id="PR:O15527"/>
<dbReference type="Proteomes" id="UP000005640">
    <property type="component" value="Chromosome 3"/>
</dbReference>
<dbReference type="RNAct" id="O15527">
    <property type="molecule type" value="protein"/>
</dbReference>
<dbReference type="Bgee" id="ENSG00000114026">
    <property type="expression patterns" value="Expressed in cortical plate and 202 other cell types or tissues"/>
</dbReference>
<dbReference type="ExpressionAtlas" id="O15527">
    <property type="expression patterns" value="baseline and differential"/>
</dbReference>
<dbReference type="GO" id="GO:0005829">
    <property type="term" value="C:cytosol"/>
    <property type="evidence" value="ECO:0000304"/>
    <property type="project" value="Reactome"/>
</dbReference>
<dbReference type="GO" id="GO:0005759">
    <property type="term" value="C:mitochondrial matrix"/>
    <property type="evidence" value="ECO:0000304"/>
    <property type="project" value="Reactome"/>
</dbReference>
<dbReference type="GO" id="GO:0005739">
    <property type="term" value="C:mitochondrion"/>
    <property type="evidence" value="ECO:0006056"/>
    <property type="project" value="FlyBase"/>
</dbReference>
<dbReference type="GO" id="GO:0016363">
    <property type="term" value="C:nuclear matrix"/>
    <property type="evidence" value="ECO:0000314"/>
    <property type="project" value="UniProtKB"/>
</dbReference>
<dbReference type="GO" id="GO:0016607">
    <property type="term" value="C:nuclear speck"/>
    <property type="evidence" value="ECO:0000314"/>
    <property type="project" value="UniProtKB"/>
</dbReference>
<dbReference type="GO" id="GO:0005654">
    <property type="term" value="C:nucleoplasm"/>
    <property type="evidence" value="ECO:0000314"/>
    <property type="project" value="HPA"/>
</dbReference>
<dbReference type="GO" id="GO:0005634">
    <property type="term" value="C:nucleus"/>
    <property type="evidence" value="ECO:0000314"/>
    <property type="project" value="MGI"/>
</dbReference>
<dbReference type="GO" id="GO:0032991">
    <property type="term" value="C:protein-containing complex"/>
    <property type="evidence" value="ECO:0000314"/>
    <property type="project" value="MGI"/>
</dbReference>
<dbReference type="GO" id="GO:0034039">
    <property type="term" value="F:8-oxo-7,8-dihydroguanine DNA N-glycosylase activity"/>
    <property type="evidence" value="ECO:0000315"/>
    <property type="project" value="CACAO"/>
</dbReference>
<dbReference type="GO" id="GO:0140078">
    <property type="term" value="F:class I DNA-(apurinic or apyrimidinic site) endonuclease activity"/>
    <property type="evidence" value="ECO:0007669"/>
    <property type="project" value="UniProtKB-EC"/>
</dbReference>
<dbReference type="GO" id="GO:0003684">
    <property type="term" value="F:damaged DNA binding"/>
    <property type="evidence" value="ECO:0000314"/>
    <property type="project" value="UniProtKB"/>
</dbReference>
<dbReference type="GO" id="GO:0003677">
    <property type="term" value="F:DNA binding"/>
    <property type="evidence" value="ECO:0000314"/>
    <property type="project" value="MGI"/>
</dbReference>
<dbReference type="GO" id="GO:0004519">
    <property type="term" value="F:endonuclease activity"/>
    <property type="evidence" value="ECO:0000304"/>
    <property type="project" value="ProtInc"/>
</dbReference>
<dbReference type="GO" id="GO:0019899">
    <property type="term" value="F:enzyme binding"/>
    <property type="evidence" value="ECO:0000353"/>
    <property type="project" value="ARUK-UCL"/>
</dbReference>
<dbReference type="GO" id="GO:0008017">
    <property type="term" value="F:microtubule binding"/>
    <property type="evidence" value="ECO:0007669"/>
    <property type="project" value="Ensembl"/>
</dbReference>
<dbReference type="GO" id="GO:0032357">
    <property type="term" value="F:oxidized purine DNA binding"/>
    <property type="evidence" value="ECO:0000314"/>
    <property type="project" value="UniProtKB"/>
</dbReference>
<dbReference type="GO" id="GO:0008534">
    <property type="term" value="F:oxidized purine nucleobase lesion DNA N-glycosylase activity"/>
    <property type="evidence" value="ECO:0000304"/>
    <property type="project" value="Reactome"/>
</dbReference>
<dbReference type="GO" id="GO:0000978">
    <property type="term" value="F:RNA polymerase II cis-regulatory region sequence-specific DNA binding"/>
    <property type="evidence" value="ECO:0000314"/>
    <property type="project" value="ARUK-UCL"/>
</dbReference>
<dbReference type="GO" id="GO:0006284">
    <property type="term" value="P:base-excision repair"/>
    <property type="evidence" value="ECO:0000304"/>
    <property type="project" value="ProtInc"/>
</dbReference>
<dbReference type="GO" id="GO:0006285">
    <property type="term" value="P:base-excision repair, AP site formation"/>
    <property type="evidence" value="ECO:0000318"/>
    <property type="project" value="GO_Central"/>
</dbReference>
<dbReference type="GO" id="GO:0034614">
    <property type="term" value="P:cellular response to reactive oxygen species"/>
    <property type="evidence" value="ECO:0000315"/>
    <property type="project" value="ARUK-UCL"/>
</dbReference>
<dbReference type="GO" id="GO:0045007">
    <property type="term" value="P:depurination"/>
    <property type="evidence" value="ECO:0000304"/>
    <property type="project" value="Reactome"/>
</dbReference>
<dbReference type="GO" id="GO:0045008">
    <property type="term" value="P:depyrimidination"/>
    <property type="evidence" value="ECO:0000304"/>
    <property type="project" value="Reactome"/>
</dbReference>
<dbReference type="GO" id="GO:0006974">
    <property type="term" value="P:DNA damage response"/>
    <property type="evidence" value="ECO:0000316"/>
    <property type="project" value="MGI"/>
</dbReference>
<dbReference type="GO" id="GO:1901291">
    <property type="term" value="P:negative regulation of double-strand break repair via single-strand annealing"/>
    <property type="evidence" value="ECO:0000314"/>
    <property type="project" value="MGI"/>
</dbReference>
<dbReference type="GO" id="GO:0006289">
    <property type="term" value="P:nucleotide-excision repair"/>
    <property type="evidence" value="ECO:0000314"/>
    <property type="project" value="MGI"/>
</dbReference>
<dbReference type="GO" id="GO:0044029">
    <property type="term" value="P:positive regulation of gene expression via chromosomal CpG island demethylation"/>
    <property type="evidence" value="ECO:0000315"/>
    <property type="project" value="ARUK-UCL"/>
</dbReference>
<dbReference type="GO" id="GO:0045944">
    <property type="term" value="P:positive regulation of transcription by RNA polymerase II"/>
    <property type="evidence" value="ECO:0000315"/>
    <property type="project" value="ARUK-UCL"/>
</dbReference>
<dbReference type="GO" id="GO:0006355">
    <property type="term" value="P:regulation of DNA-templated transcription"/>
    <property type="evidence" value="ECO:0000315"/>
    <property type="project" value="UniProtKB"/>
</dbReference>
<dbReference type="GO" id="GO:0006979">
    <property type="term" value="P:response to oxidative stress"/>
    <property type="evidence" value="ECO:0000314"/>
    <property type="project" value="UniProtKB"/>
</dbReference>
<dbReference type="GO" id="GO:0009314">
    <property type="term" value="P:response to radiation"/>
    <property type="evidence" value="ECO:0000314"/>
    <property type="project" value="UniProtKB"/>
</dbReference>
<dbReference type="CDD" id="cd00056">
    <property type="entry name" value="ENDO3c"/>
    <property type="match status" value="1"/>
</dbReference>
<dbReference type="FunFam" id="1.10.1670.10:FF:000013">
    <property type="entry name" value="8-oxoguanine DNA glycosylase"/>
    <property type="match status" value="1"/>
</dbReference>
<dbReference type="FunFam" id="1.10.340.30:FF:000006">
    <property type="entry name" value="N-glycosylase/DNA lyase isoform X2"/>
    <property type="match status" value="1"/>
</dbReference>
<dbReference type="FunFam" id="3.30.310.40:FF:000001">
    <property type="entry name" value="N-glycosylase/DNA lyase isoform X2"/>
    <property type="match status" value="1"/>
</dbReference>
<dbReference type="FunFam" id="1.10.1670.10:FF:000005">
    <property type="entry name" value="N-glycosylase/DNA lyase OGG1"/>
    <property type="match status" value="1"/>
</dbReference>
<dbReference type="Gene3D" id="3.30.310.40">
    <property type="match status" value="1"/>
</dbReference>
<dbReference type="Gene3D" id="1.10.1670.10">
    <property type="entry name" value="Helix-hairpin-Helix base-excision DNA repair enzymes (C-terminal)"/>
    <property type="match status" value="1"/>
</dbReference>
<dbReference type="Gene3D" id="1.10.340.30">
    <property type="entry name" value="Hypothetical protein, domain 2"/>
    <property type="match status" value="1"/>
</dbReference>
<dbReference type="InterPro" id="IPR011257">
    <property type="entry name" value="DNA_glycosylase"/>
</dbReference>
<dbReference type="InterPro" id="IPR003265">
    <property type="entry name" value="HhH-GPD_domain"/>
</dbReference>
<dbReference type="InterPro" id="IPR023170">
    <property type="entry name" value="HhH_base_excis_C"/>
</dbReference>
<dbReference type="InterPro" id="IPR004577">
    <property type="entry name" value="Ogg1"/>
</dbReference>
<dbReference type="InterPro" id="IPR012904">
    <property type="entry name" value="OGG_N"/>
</dbReference>
<dbReference type="InterPro" id="IPR052054">
    <property type="entry name" value="Oxidative_DNA_repair_enzyme"/>
</dbReference>
<dbReference type="NCBIfam" id="TIGR00588">
    <property type="entry name" value="ogg"/>
    <property type="match status" value="1"/>
</dbReference>
<dbReference type="PANTHER" id="PTHR10242">
    <property type="entry name" value="8-OXOGUANINE DNA GLYCOSYLASE"/>
    <property type="match status" value="1"/>
</dbReference>
<dbReference type="PANTHER" id="PTHR10242:SF2">
    <property type="entry name" value="N-GLYCOSYLASE_DNA LYASE"/>
    <property type="match status" value="1"/>
</dbReference>
<dbReference type="Pfam" id="PF00730">
    <property type="entry name" value="HhH-GPD"/>
    <property type="match status" value="1"/>
</dbReference>
<dbReference type="Pfam" id="PF07934">
    <property type="entry name" value="OGG_N"/>
    <property type="match status" value="1"/>
</dbReference>
<dbReference type="SMART" id="SM00478">
    <property type="entry name" value="ENDO3c"/>
    <property type="match status" value="1"/>
</dbReference>
<dbReference type="SUPFAM" id="SSF48150">
    <property type="entry name" value="DNA-glycosylase"/>
    <property type="match status" value="1"/>
</dbReference>
<dbReference type="SUPFAM" id="SSF55945">
    <property type="entry name" value="TATA-box binding protein-like"/>
    <property type="match status" value="1"/>
</dbReference>
<proteinExistence type="evidence at protein level"/>
<protein>
    <recommendedName>
        <fullName>N-glycosylase/DNA lyase</fullName>
    </recommendedName>
    <domain>
        <recommendedName>
            <fullName>8-oxoguanine DNA glycosylase</fullName>
            <ecNumber>3.2.2.-</ecNumber>
        </recommendedName>
    </domain>
    <domain>
        <recommendedName>
            <fullName>DNA-(apurinic or apyrimidinic site) lyase</fullName>
            <shortName>AP lyase</shortName>
            <ecNumber>4.2.99.18</ecNumber>
        </recommendedName>
    </domain>
</protein>
<name>OGG1_HUMAN</name>
<keyword id="KW-0002">3D-structure</keyword>
<keyword id="KW-0025">Alternative splicing</keyword>
<keyword id="KW-0227">DNA damage</keyword>
<keyword id="KW-0234">DNA repair</keyword>
<keyword id="KW-0326">Glycosidase</keyword>
<keyword id="KW-0378">Hydrolase</keyword>
<keyword id="KW-0456">Lyase</keyword>
<keyword id="KW-0496">Mitochondrion</keyword>
<keyword id="KW-0511">Multifunctional enzyme</keyword>
<keyword id="KW-0539">Nucleus</keyword>
<keyword id="KW-1267">Proteomics identification</keyword>
<keyword id="KW-1185">Reference proteome</keyword>
<feature type="chain" id="PRO_0000058591" description="N-glycosylase/DNA lyase">
    <location>
        <begin position="1"/>
        <end position="345"/>
    </location>
</feature>
<feature type="region of interest" description="Disordered" evidence="1">
    <location>
        <begin position="324"/>
        <end position="345"/>
    </location>
</feature>
<feature type="compositionally biased region" description="Basic and acidic residues" evidence="1">
    <location>
        <begin position="324"/>
        <end position="334"/>
    </location>
</feature>
<feature type="compositionally biased region" description="Basic residues" evidence="1">
    <location>
        <begin position="335"/>
        <end position="345"/>
    </location>
</feature>
<feature type="active site" description="Schiff-base intermediate with DNA" evidence="13">
    <location>
        <position position="249"/>
    </location>
</feature>
<feature type="binding site" evidence="3 5 7 8 11">
    <location>
        <position position="149"/>
    </location>
    <ligand>
        <name>DNA</name>
        <dbReference type="ChEBI" id="CHEBI:16991"/>
    </ligand>
</feature>
<feature type="binding site" evidence="3 5 7 8 11">
    <location>
        <position position="154"/>
    </location>
    <ligand>
        <name>DNA</name>
        <dbReference type="ChEBI" id="CHEBI:16991"/>
    </ligand>
</feature>
<feature type="binding site" evidence="3 5 7 8 11">
    <location>
        <position position="204"/>
    </location>
    <ligand>
        <name>DNA</name>
        <dbReference type="ChEBI" id="CHEBI:16991"/>
    </ligand>
</feature>
<feature type="binding site">
    <location>
        <position position="266"/>
    </location>
    <ligand>
        <name>8-oxoguanine</name>
        <dbReference type="ChEBI" id="CHEBI:52617"/>
    </ligand>
</feature>
<feature type="binding site">
    <location>
        <position position="268"/>
    </location>
    <ligand>
        <name>8-oxoguanine</name>
        <dbReference type="ChEBI" id="CHEBI:52617"/>
    </ligand>
</feature>
<feature type="binding site" evidence="3 5 7 8 11">
    <location>
        <position position="270"/>
    </location>
    <ligand>
        <name>DNA</name>
        <dbReference type="ChEBI" id="CHEBI:16991"/>
    </ligand>
</feature>
<feature type="binding site" evidence="3 5 7 8 11">
    <location>
        <position position="287"/>
    </location>
    <ligand>
        <name>DNA</name>
        <dbReference type="ChEBI" id="CHEBI:16991"/>
    </ligand>
</feature>
<feature type="binding site">
    <location>
        <position position="315"/>
    </location>
    <ligand>
        <name>8-oxoguanine</name>
        <dbReference type="ChEBI" id="CHEBI:52617"/>
    </ligand>
</feature>
<feature type="binding site">
    <location>
        <position position="319"/>
    </location>
    <ligand>
        <name>8-oxoguanine</name>
        <dbReference type="ChEBI" id="CHEBI:52617"/>
    </ligand>
</feature>
<feature type="splice variant" id="VSP_003750" description="In isoform 2C." evidence="19">
    <original>EVEAH</original>
    <variation>PWQCI</variation>
    <location>
        <begin position="191"/>
        <end position="195"/>
    </location>
</feature>
<feature type="splice variant" id="VSP_003751" description="In isoform 2C." evidence="19">
    <location>
        <begin position="196"/>
        <end position="345"/>
    </location>
</feature>
<feature type="splice variant" id="VSP_003749" description="In isoform 2B." evidence="19">
    <original>VADCICLMALDKPQAVPVDVHMWHIAQRDYSWHPTTSQAKGPSPQTNKELGNFFRSLWGPYAGWAQAVLFSADLRQSRHAQEPPAKRRKGSKGPEG</original>
    <variation>GLLGNAFDGHQLLRPLIFCQDHLREGPPIGRGDSQGEELEPQLPSSLSSIPYGFCDHCWTKDVDDPPLVTHPSPGSRDGHMTQAWPVKVVSPLATVIGHVMQASLLAL</variation>
    <location>
        <begin position="250"/>
        <end position="345"/>
    </location>
</feature>
<feature type="splice variant" id="VSP_003746" description="In isoform 1B." evidence="17">
    <original>VLFSADLRQSRHAQEPPAKRRKGSKGPEG</original>
    <variation>VSVPRCPP</variation>
    <location>
        <begin position="317"/>
        <end position="345"/>
    </location>
</feature>
<feature type="splice variant" id="VSP_003747" description="In isoform 1C." evidence="19">
    <original>VLFSADLRQSRHAQEPPAKRRKGSKGPEG</original>
    <variation>TPPSYRCCSVPTCANPAMLRSHQQSAERVPKGRKARWGTLDKEIPQAPSPPFPTSLSPSPPSLMLGRGLPVTTSKARHPQIKQSVCTTRWGGGY</variation>
    <location>
        <begin position="317"/>
        <end position="345"/>
    </location>
</feature>
<feature type="splice variant" id="VSP_003748" description="In isoform 2A." evidence="17 18">
    <original>VLFSADLRQSRHAQEPPAKRRKGSKGPEG</original>
    <variation>GLLGNAFDGHQLLRPLIFCQDHLREGPPIGRGDSQGEELEPQLPSSLSSIPYGFCDHCWTKDVDDPPLVTHPSPGSRDGHMTQAWPVKVVSPLATVIGHVMQASLLAL</variation>
    <location>
        <begin position="317"/>
        <end position="345"/>
    </location>
</feature>
<feature type="splice variant" id="VSP_003752" description="In isoform 2D." evidence="19">
    <original>VLFSADLRQSRHAQEPPAKRRKGSKGPEG</original>
    <variation>LCQVITTFMTFLGPHRLDQMPPEELQTSSSRLGGPPWQCI</variation>
    <location>
        <begin position="317"/>
        <end position="345"/>
    </location>
</feature>
<feature type="splice variant" id="VSP_003753" description="In isoform 2E." evidence="19">
    <original>VLFSADLRQSRHAQEPPAKRRKGSKGPEG</original>
    <variation>AGSDAS</variation>
    <location>
        <begin position="317"/>
        <end position="345"/>
    </location>
</feature>
<feature type="sequence variant" id="VAR_024831" description="Found in a kidney cancer sample; no effect on activity; abolishes mitochondrial localization; dbSNP:rs772520254." evidence="6">
    <original>G</original>
    <variation>E</variation>
    <location>
        <position position="12"/>
    </location>
</feature>
<feature type="sequence variant" id="VAR_009519" description="Found in a clear cell renal cell carcinoma sample; somatic mutation; diminished activity; dbSNP:rs104893751." evidence="4">
    <original>R</original>
    <variation>Q</variation>
    <location>
        <position position="46"/>
    </location>
</feature>
<feature type="sequence variant" id="VAR_024832" description="Found in a lung cancer sample; dbSNP:rs17050550." evidence="14">
    <original>A</original>
    <variation>S</variation>
    <location>
        <position position="85"/>
    </location>
</feature>
<feature type="sequence variant" id="VAR_024833" description="Found in a lung cancer sample; loss of activity; dbSNP:rs747638147." evidence="14">
    <original>R</original>
    <variation>Q</variation>
    <location>
        <position position="131"/>
    </location>
</feature>
<feature type="sequence variant" id="VAR_009520" description="Found in a gastric cancer sample; no effect on base-excision activity; alters substrate specificity and strongly increases mutagenic mis-repair; dbSNP:rs56053615." evidence="3 4 15">
    <original>R</original>
    <variation>H</variation>
    <location>
        <position position="154"/>
    </location>
</feature>
<feature type="sequence variant" id="VAR_014487" description="In dbSNP:rs1805373." evidence="16">
    <original>R</original>
    <variation>Q</variation>
    <location>
        <position position="229"/>
    </location>
</feature>
<feature type="sequence variant" id="VAR_024834" description="Found in a kidney cancer sample; dbSNP:rs2077463337." evidence="14">
    <original>S</original>
    <variation>T</variation>
    <location>
        <position position="232"/>
    </location>
</feature>
<feature type="sequence variant" id="VAR_018890" description="In dbSNP:rs3219012." evidence="16">
    <original>A</original>
    <variation>V</variation>
    <location>
        <position position="288"/>
    </location>
</feature>
<feature type="sequence variant" id="VAR_014488" description="In dbSNP:rs1801128.">
    <original>S</original>
    <variation>T</variation>
    <location>
        <position position="320"/>
    </location>
</feature>
<feature type="sequence variant" id="VAR_018891" description="In dbSNP:rs3219014." evidence="16">
    <original>D</original>
    <variation>N</variation>
    <location>
        <position position="322"/>
    </location>
</feature>
<feature type="sequence variant" id="VAR_009521" description="In dbSNP:rs1052133." evidence="2 9 10 16">
    <original>S</original>
    <variation>C</variation>
    <location>
        <position position="326"/>
    </location>
</feature>
<feature type="mutagenesis site" description="Loss of activity." evidence="13">
    <original>K</original>
    <variation>Q</variation>
    <location>
        <position position="249"/>
    </location>
</feature>
<feature type="mutagenesis site" description="No effect on activity." evidence="7">
    <original>D</original>
    <variation>E</variation>
    <variation>Q</variation>
    <location>
        <position position="268"/>
    </location>
</feature>
<feature type="mutagenesis site" description="Decreases activity about 65-fold." evidence="7">
    <original>D</original>
    <variation>N</variation>
    <location>
        <position position="268"/>
    </location>
</feature>
<feature type="sequence conflict" description="In Ref. 9; CAA10351." evidence="19" ref="9">
    <original>W</original>
    <variation>WW</variation>
    <location>
        <position position="47"/>
    </location>
</feature>
<feature type="sequence conflict" description="In Ref. 9; CAA10351." evidence="19" ref="9">
    <original>G</original>
    <variation>E</variation>
    <location>
        <position position="308"/>
    </location>
</feature>
<feature type="sequence conflict" description="In Ref. 2; AAB81132." evidence="19" ref="2">
    <original>A</original>
    <variation>ATPPSLQ</variation>
    <location>
        <position position="316"/>
    </location>
</feature>
<feature type="strand" evidence="20">
    <location>
        <begin position="11"/>
        <end position="13"/>
    </location>
</feature>
<feature type="turn" evidence="22">
    <location>
        <begin position="16"/>
        <end position="18"/>
    </location>
</feature>
<feature type="helix" evidence="22">
    <location>
        <begin position="20"/>
        <end position="22"/>
    </location>
</feature>
<feature type="strand" evidence="22">
    <location>
        <begin position="24"/>
        <end position="27"/>
    </location>
</feature>
<feature type="turn" evidence="22">
    <location>
        <begin position="30"/>
        <end position="32"/>
    </location>
</feature>
<feature type="helix" evidence="22">
    <location>
        <begin position="35"/>
        <end position="38"/>
    </location>
</feature>
<feature type="turn" evidence="22">
    <location>
        <begin position="39"/>
        <end position="42"/>
    </location>
</feature>
<feature type="strand" evidence="22">
    <location>
        <begin position="48"/>
        <end position="51"/>
    </location>
</feature>
<feature type="strand" evidence="22">
    <location>
        <begin position="54"/>
        <end position="59"/>
    </location>
</feature>
<feature type="strand" evidence="22">
    <location>
        <begin position="62"/>
        <end position="68"/>
    </location>
</feature>
<feature type="strand" evidence="22">
    <location>
        <begin position="70"/>
        <end position="78"/>
    </location>
</feature>
<feature type="strand" evidence="22">
    <location>
        <begin position="81"/>
        <end position="83"/>
    </location>
</feature>
<feature type="helix" evidence="22">
    <location>
        <begin position="90"/>
        <end position="99"/>
    </location>
</feature>
<feature type="turn" evidence="22">
    <location>
        <begin position="100"/>
        <end position="103"/>
    </location>
</feature>
<feature type="helix" evidence="22">
    <location>
        <begin position="106"/>
        <end position="116"/>
    </location>
</feature>
<feature type="helix" evidence="22">
    <location>
        <begin position="118"/>
        <end position="126"/>
    </location>
</feature>
<feature type="helix" evidence="22">
    <location>
        <begin position="137"/>
        <end position="145"/>
    </location>
</feature>
<feature type="turn" evidence="22">
    <location>
        <begin position="146"/>
        <end position="149"/>
    </location>
</feature>
<feature type="helix" evidence="22">
    <location>
        <begin position="152"/>
        <end position="166"/>
    </location>
</feature>
<feature type="strand" evidence="22">
    <location>
        <begin position="169"/>
        <end position="173"/>
    </location>
</feature>
<feature type="strand" evidence="22">
    <location>
        <begin position="176"/>
        <end position="179"/>
    </location>
</feature>
<feature type="helix" evidence="22">
    <location>
        <begin position="184"/>
        <end position="187"/>
    </location>
</feature>
<feature type="helix" evidence="22">
    <location>
        <begin position="192"/>
        <end position="198"/>
    </location>
</feature>
<feature type="helix" evidence="22">
    <location>
        <begin position="204"/>
        <end position="217"/>
    </location>
</feature>
<feature type="helix" evidence="22">
    <location>
        <begin position="222"/>
        <end position="226"/>
    </location>
</feature>
<feature type="helix" evidence="22">
    <location>
        <begin position="227"/>
        <end position="229"/>
    </location>
</feature>
<feature type="helix" evidence="22">
    <location>
        <begin position="233"/>
        <end position="240"/>
    </location>
</feature>
<feature type="helix" evidence="22">
    <location>
        <begin position="248"/>
        <end position="258"/>
    </location>
</feature>
<feature type="helix" evidence="22">
    <location>
        <begin position="269"/>
        <end position="279"/>
    </location>
</feature>
<feature type="strand" evidence="23">
    <location>
        <begin position="284"/>
        <end position="287"/>
    </location>
</feature>
<feature type="strand" evidence="21">
    <location>
        <begin position="289"/>
        <end position="292"/>
    </location>
</feature>
<feature type="helix" evidence="22">
    <location>
        <begin position="293"/>
        <end position="307"/>
    </location>
</feature>
<feature type="helix" evidence="22">
    <location>
        <begin position="311"/>
        <end position="323"/>
    </location>
</feature>
<evidence type="ECO:0000256" key="1">
    <source>
        <dbReference type="SAM" id="MobiDB-lite"/>
    </source>
</evidence>
<evidence type="ECO:0000269" key="2">
    <source>
    </source>
</evidence>
<evidence type="ECO:0000269" key="3">
    <source>
    </source>
</evidence>
<evidence type="ECO:0000269" key="4">
    <source>
    </source>
</evidence>
<evidence type="ECO:0000269" key="5">
    <source>
    </source>
</evidence>
<evidence type="ECO:0000269" key="6">
    <source>
    </source>
</evidence>
<evidence type="ECO:0000269" key="7">
    <source>
    </source>
</evidence>
<evidence type="ECO:0000269" key="8">
    <source>
    </source>
</evidence>
<evidence type="ECO:0000269" key="9">
    <source>
    </source>
</evidence>
<evidence type="ECO:0000269" key="10">
    <source>
    </source>
</evidence>
<evidence type="ECO:0000269" key="11">
    <source>
    </source>
</evidence>
<evidence type="ECO:0000269" key="12">
    <source>
    </source>
</evidence>
<evidence type="ECO:0000269" key="13">
    <source>
    </source>
</evidence>
<evidence type="ECO:0000269" key="14">
    <source>
    </source>
</evidence>
<evidence type="ECO:0000269" key="15">
    <source>
    </source>
</evidence>
<evidence type="ECO:0000269" key="16">
    <source ref="13"/>
</evidence>
<evidence type="ECO:0000303" key="17">
    <source>
    </source>
</evidence>
<evidence type="ECO:0000303" key="18">
    <source>
    </source>
</evidence>
<evidence type="ECO:0000305" key="19"/>
<evidence type="ECO:0007829" key="20">
    <source>
        <dbReference type="PDB" id="1EBM"/>
    </source>
</evidence>
<evidence type="ECO:0007829" key="21">
    <source>
        <dbReference type="PDB" id="1M3Q"/>
    </source>
</evidence>
<evidence type="ECO:0007829" key="22">
    <source>
        <dbReference type="PDB" id="2XHI"/>
    </source>
</evidence>
<evidence type="ECO:0007829" key="23">
    <source>
        <dbReference type="PDB" id="5AN4"/>
    </source>
</evidence>
<reference key="1">
    <citation type="journal article" date="1997" name="Cancer Res.">
        <title>Cloning and characterization of mammalian 8-hydroxyguanine-specific DNA glycosylase/apurinic, apyrimidinic lyase, a functional mutM homologue.</title>
        <authorList>
            <person name="Aburatani H."/>
            <person name="Hippo Y."/>
            <person name="Ishida T."/>
            <person name="Takashima R."/>
            <person name="Matsuba C."/>
            <person name="Kodama T."/>
            <person name="Takao M."/>
            <person name="Yasui A."/>
            <person name="Yamamoto K."/>
            <person name="Asano M."/>
            <person name="Fukasawa K."/>
            <person name="Yoshinari T."/>
            <person name="Inoue H."/>
            <person name="Otsuka E."/>
            <person name="Nishimura S."/>
        </authorList>
    </citation>
    <scope>NUCLEOTIDE SEQUENCE [MRNA] (ISOFORMS 1A; 1B AND 2A)</scope>
    <source>
        <tissue>Colon</tissue>
    </source>
</reference>
<reference key="2">
    <citation type="journal article" date="1997" name="Proc. Natl. Acad. Sci. U.S.A.">
        <title>Cloning and characterization of a mammalian 8-oxoguanine DNA glycosylase.</title>
        <authorList>
            <person name="Rosenquist T.A."/>
            <person name="Zharkov D.O."/>
            <person name="Grollman A.P."/>
        </authorList>
    </citation>
    <scope>NUCLEOTIDE SEQUENCE [MRNA] (ISOFORM 1A)</scope>
</reference>
<reference key="3">
    <citation type="journal article" date="1997" name="Proc. Natl. Acad. Sci. U.S.A.">
        <title>Molecular cloning and functional expression of a human cDNA encoding the antimutator enzyme 8-hydroxyguanine-DNA glycosylase.</title>
        <authorList>
            <person name="Roldan-Arjona T."/>
            <person name="Wei Y.-F."/>
            <person name="Carter K.C."/>
            <person name="Klungland A."/>
            <person name="Anselmino C."/>
            <person name="Wang R.-P."/>
            <person name="Augustus M."/>
            <person name="Lindahl T."/>
        </authorList>
    </citation>
    <scope>NUCLEOTIDE SEQUENCE [MRNA] (ISOFORM 2A)</scope>
</reference>
<reference key="4">
    <citation type="journal article" date="1997" name="Proc. Natl. Acad. Sci. U.S.A.">
        <title>Cloning and characterization of hOGG1, a human homolog of the OGG1 gene of Saccharomyces cerevisiae.</title>
        <authorList>
            <person name="Radicella J.P."/>
            <person name="Dherin C."/>
            <person name="Desmaze C."/>
            <person name="Fox M.S."/>
            <person name="Boiteux S."/>
        </authorList>
    </citation>
    <scope>NUCLEOTIDE SEQUENCE [MRNA] (ISOFORM 1A)</scope>
</reference>
<reference key="5">
    <citation type="journal article" date="1997" name="Curr. Biol.">
        <title>A mammalian DNA repair enzyme that excises oxidatively damaged guanines maps to a locus frequently lost in lung cancer.</title>
        <authorList>
            <person name="Lu R."/>
            <person name="Nash H.M."/>
            <person name="Verdine G.L."/>
        </authorList>
    </citation>
    <scope>NUCLEOTIDE SEQUENCE [MRNA] (ISOFORM 1A)</scope>
    <scope>ACTIVE SITE</scope>
    <scope>MUTAGENESIS OF LYS-249</scope>
</reference>
<reference key="6">
    <citation type="journal article" date="1997" name="Oncogene">
        <title>Cloning of a human homolog of the yeast OGG1 gene that is involved in the repair of oxidative DNA damage.</title>
        <authorList>
            <person name="Arai K."/>
            <person name="Morishita K."/>
            <person name="Shinmura K."/>
            <person name="Kohno T."/>
            <person name="Taniwaki M."/>
            <person name="Ohwada S."/>
            <person name="Yokota J."/>
        </authorList>
    </citation>
    <scope>NUCLEOTIDE SEQUENCE [MRNA] (ISOFORM 1A)</scope>
</reference>
<reference key="7">
    <citation type="journal article" date="1997" name="J. Exp. Med.">
        <title>Augmented expression of a human gene for 8-oxoguanine DNA glycosylase (MutM) in B lymphocytes of the dark zone in lymph node germinal centers.</title>
        <authorList>
            <person name="Kuo F.C."/>
            <person name="Sklar J.L."/>
        </authorList>
    </citation>
    <scope>NUCLEOTIDE SEQUENCE [MRNA] (ISOFORM 1A)</scope>
</reference>
<reference key="8">
    <citation type="journal article" date="1997" name="EMBO J.">
        <title>Opposite base-dependent reactions of a human base excision repair enzyme on DNA containing 7,8-dihydro-8-oxoguanine and abasic sites.</title>
        <authorList>
            <person name="Bjoras M."/>
            <person name="Luna L."/>
            <person name="Johnsen B.E."/>
            <person name="Hoff E."/>
            <person name="Haug T."/>
            <person name="Rognes T."/>
            <person name="Seeberg E."/>
        </authorList>
    </citation>
    <scope>NUCLEOTIDE SEQUENCE [MRNA] (ISOFORM 1A)</scope>
</reference>
<reference key="9">
    <citation type="submission" date="1998-12" db="EMBL/GenBank/DDBJ databases">
        <title>Genomic structure and promoter characterization of the human 8-OH-guanine glycosylase gene (OGG1) gene.</title>
        <authorList>
            <person name="Dhenaut A."/>
            <person name="Boiteux S."/>
            <person name="Radicella J."/>
        </authorList>
    </citation>
    <scope>NUCLEOTIDE SEQUENCE [GENOMIC DNA]</scope>
</reference>
<reference key="10">
    <citation type="journal article" date="1999" name="Cytogenet. Cell Genet.">
        <title>Structure and chromosome location of human OGG1.</title>
        <authorList>
            <person name="Ishida T."/>
            <person name="Hippo Y."/>
            <person name="Nakahori Y."/>
            <person name="Matsushita I."/>
            <person name="Kodama T."/>
            <person name="Nishimura S."/>
            <person name="Aburatani H."/>
        </authorList>
    </citation>
    <scope>NUCLEOTIDE SEQUENCE [GENOMIC DNA]</scope>
    <scope>ALTERNATIVE SPLICING</scope>
</reference>
<reference key="11">
    <citation type="journal article" date="1999" name="Mol. Biol. Cell">
        <title>Expression and differential intracellular localization of two major forms of human 8-Oxoguanine DNA glycosylase encoded by alternatively spliced OGG1 mRNAs.</title>
        <authorList>
            <person name="Nishioka K."/>
            <person name="Ohtsubo T."/>
            <person name="Oda H."/>
            <person name="Fujiwara T."/>
            <person name="Kang D."/>
            <person name="Sugimachi K."/>
            <person name="Nakabeppu Y."/>
        </authorList>
    </citation>
    <scope>NUCLEOTIDE SEQUENCE [MRNA]</scope>
    <scope>ALTERNATIVE SPLICING</scope>
</reference>
<reference key="12">
    <citation type="journal article" date="2004" name="Nat. Genet.">
        <title>Complete sequencing and characterization of 21,243 full-length human cDNAs.</title>
        <authorList>
            <person name="Ota T."/>
            <person name="Suzuki Y."/>
            <person name="Nishikawa T."/>
            <person name="Otsuki T."/>
            <person name="Sugiyama T."/>
            <person name="Irie R."/>
            <person name="Wakamatsu A."/>
            <person name="Hayashi K."/>
            <person name="Sato H."/>
            <person name="Nagai K."/>
            <person name="Kimura K."/>
            <person name="Makita H."/>
            <person name="Sekine M."/>
            <person name="Obayashi M."/>
            <person name="Nishi T."/>
            <person name="Shibahara T."/>
            <person name="Tanaka T."/>
            <person name="Ishii S."/>
            <person name="Yamamoto J."/>
            <person name="Saito K."/>
            <person name="Kawai Y."/>
            <person name="Isono Y."/>
            <person name="Nakamura Y."/>
            <person name="Nagahari K."/>
            <person name="Murakami K."/>
            <person name="Yasuda T."/>
            <person name="Iwayanagi T."/>
            <person name="Wagatsuma M."/>
            <person name="Shiratori A."/>
            <person name="Sudo H."/>
            <person name="Hosoiri T."/>
            <person name="Kaku Y."/>
            <person name="Kodaira H."/>
            <person name="Kondo H."/>
            <person name="Sugawara M."/>
            <person name="Takahashi M."/>
            <person name="Kanda K."/>
            <person name="Yokoi T."/>
            <person name="Furuya T."/>
            <person name="Kikkawa E."/>
            <person name="Omura Y."/>
            <person name="Abe K."/>
            <person name="Kamihara K."/>
            <person name="Katsuta N."/>
            <person name="Sato K."/>
            <person name="Tanikawa M."/>
            <person name="Yamazaki M."/>
            <person name="Ninomiya K."/>
            <person name="Ishibashi T."/>
            <person name="Yamashita H."/>
            <person name="Murakawa K."/>
            <person name="Fujimori K."/>
            <person name="Tanai H."/>
            <person name="Kimata M."/>
            <person name="Watanabe M."/>
            <person name="Hiraoka S."/>
            <person name="Chiba Y."/>
            <person name="Ishida S."/>
            <person name="Ono Y."/>
            <person name="Takiguchi S."/>
            <person name="Watanabe S."/>
            <person name="Yosida M."/>
            <person name="Hotuta T."/>
            <person name="Kusano J."/>
            <person name="Kanehori K."/>
            <person name="Takahashi-Fujii A."/>
            <person name="Hara H."/>
            <person name="Tanase T.-O."/>
            <person name="Nomura Y."/>
            <person name="Togiya S."/>
            <person name="Komai F."/>
            <person name="Hara R."/>
            <person name="Takeuchi K."/>
            <person name="Arita M."/>
            <person name="Imose N."/>
            <person name="Musashino K."/>
            <person name="Yuuki H."/>
            <person name="Oshima A."/>
            <person name="Sasaki N."/>
            <person name="Aotsuka S."/>
            <person name="Yoshikawa Y."/>
            <person name="Matsunawa H."/>
            <person name="Ichihara T."/>
            <person name="Shiohata N."/>
            <person name="Sano S."/>
            <person name="Moriya S."/>
            <person name="Momiyama H."/>
            <person name="Satoh N."/>
            <person name="Takami S."/>
            <person name="Terashima Y."/>
            <person name="Suzuki O."/>
            <person name="Nakagawa S."/>
            <person name="Senoh A."/>
            <person name="Mizoguchi H."/>
            <person name="Goto Y."/>
            <person name="Shimizu F."/>
            <person name="Wakebe H."/>
            <person name="Hishigaki H."/>
            <person name="Watanabe T."/>
            <person name="Sugiyama A."/>
            <person name="Takemoto M."/>
            <person name="Kawakami B."/>
            <person name="Yamazaki M."/>
            <person name="Watanabe K."/>
            <person name="Kumagai A."/>
            <person name="Itakura S."/>
            <person name="Fukuzumi Y."/>
            <person name="Fujimori Y."/>
            <person name="Komiyama M."/>
            <person name="Tashiro H."/>
            <person name="Tanigami A."/>
            <person name="Fujiwara T."/>
            <person name="Ono T."/>
            <person name="Yamada K."/>
            <person name="Fujii Y."/>
            <person name="Ozaki K."/>
            <person name="Hirao M."/>
            <person name="Ohmori Y."/>
            <person name="Kawabata A."/>
            <person name="Hikiji T."/>
            <person name="Kobatake N."/>
            <person name="Inagaki H."/>
            <person name="Ikema Y."/>
            <person name="Okamoto S."/>
            <person name="Okitani R."/>
            <person name="Kawakami T."/>
            <person name="Noguchi S."/>
            <person name="Itoh T."/>
            <person name="Shigeta K."/>
            <person name="Senba T."/>
            <person name="Matsumura K."/>
            <person name="Nakajima Y."/>
            <person name="Mizuno T."/>
            <person name="Morinaga M."/>
            <person name="Sasaki M."/>
            <person name="Togashi T."/>
            <person name="Oyama M."/>
            <person name="Hata H."/>
            <person name="Watanabe M."/>
            <person name="Komatsu T."/>
            <person name="Mizushima-Sugano J."/>
            <person name="Satoh T."/>
            <person name="Shirai Y."/>
            <person name="Takahashi Y."/>
            <person name="Nakagawa K."/>
            <person name="Okumura K."/>
            <person name="Nagase T."/>
            <person name="Nomura N."/>
            <person name="Kikuchi H."/>
            <person name="Masuho Y."/>
            <person name="Yamashita R."/>
            <person name="Nakai K."/>
            <person name="Yada T."/>
            <person name="Nakamura Y."/>
            <person name="Ohara O."/>
            <person name="Isogai T."/>
            <person name="Sugano S."/>
        </authorList>
    </citation>
    <scope>NUCLEOTIDE SEQUENCE [LARGE SCALE MRNA] (ISOFORM 1A)</scope>
    <scope>VARIANT CYS-326</scope>
    <source>
        <tissue>Brain</tissue>
    </source>
</reference>
<reference key="13">
    <citation type="submission" date="2002-06" db="EMBL/GenBank/DDBJ databases">
        <authorList>
            <consortium name="NIEHS SNPs program"/>
        </authorList>
    </citation>
    <scope>NUCLEOTIDE SEQUENCE [GENOMIC DNA]</scope>
    <scope>VARIANTS GLN-229; VAL-288; ASN-322 AND CYS-326</scope>
</reference>
<reference key="14">
    <citation type="journal article" date="2006" name="Nature">
        <title>The DNA sequence, annotation and analysis of human chromosome 3.</title>
        <authorList>
            <person name="Muzny D.M."/>
            <person name="Scherer S.E."/>
            <person name="Kaul R."/>
            <person name="Wang J."/>
            <person name="Yu J."/>
            <person name="Sudbrak R."/>
            <person name="Buhay C.J."/>
            <person name="Chen R."/>
            <person name="Cree A."/>
            <person name="Ding Y."/>
            <person name="Dugan-Rocha S."/>
            <person name="Gill R."/>
            <person name="Gunaratne P."/>
            <person name="Harris R.A."/>
            <person name="Hawes A.C."/>
            <person name="Hernandez J."/>
            <person name="Hodgson A.V."/>
            <person name="Hume J."/>
            <person name="Jackson A."/>
            <person name="Khan Z.M."/>
            <person name="Kovar-Smith C."/>
            <person name="Lewis L.R."/>
            <person name="Lozado R.J."/>
            <person name="Metzker M.L."/>
            <person name="Milosavljevic A."/>
            <person name="Miner G.R."/>
            <person name="Morgan M.B."/>
            <person name="Nazareth L.V."/>
            <person name="Scott G."/>
            <person name="Sodergren E."/>
            <person name="Song X.-Z."/>
            <person name="Steffen D."/>
            <person name="Wei S."/>
            <person name="Wheeler D.A."/>
            <person name="Wright M.W."/>
            <person name="Worley K.C."/>
            <person name="Yuan Y."/>
            <person name="Zhang Z."/>
            <person name="Adams C.Q."/>
            <person name="Ansari-Lari M.A."/>
            <person name="Ayele M."/>
            <person name="Brown M.J."/>
            <person name="Chen G."/>
            <person name="Chen Z."/>
            <person name="Clendenning J."/>
            <person name="Clerc-Blankenburg K.P."/>
            <person name="Chen R."/>
            <person name="Chen Z."/>
            <person name="Davis C."/>
            <person name="Delgado O."/>
            <person name="Dinh H.H."/>
            <person name="Dong W."/>
            <person name="Draper H."/>
            <person name="Ernst S."/>
            <person name="Fu G."/>
            <person name="Gonzalez-Garay M.L."/>
            <person name="Garcia D.K."/>
            <person name="Gillett W."/>
            <person name="Gu J."/>
            <person name="Hao B."/>
            <person name="Haugen E."/>
            <person name="Havlak P."/>
            <person name="He X."/>
            <person name="Hennig S."/>
            <person name="Hu S."/>
            <person name="Huang W."/>
            <person name="Jackson L.R."/>
            <person name="Jacob L.S."/>
            <person name="Kelly S.H."/>
            <person name="Kube M."/>
            <person name="Levy R."/>
            <person name="Li Z."/>
            <person name="Liu B."/>
            <person name="Liu J."/>
            <person name="Liu W."/>
            <person name="Lu J."/>
            <person name="Maheshwari M."/>
            <person name="Nguyen B.-V."/>
            <person name="Okwuonu G.O."/>
            <person name="Palmeiri A."/>
            <person name="Pasternak S."/>
            <person name="Perez L.M."/>
            <person name="Phelps K.A."/>
            <person name="Plopper F.J."/>
            <person name="Qiang B."/>
            <person name="Raymond C."/>
            <person name="Rodriguez R."/>
            <person name="Saenphimmachak C."/>
            <person name="Santibanez J."/>
            <person name="Shen H."/>
            <person name="Shen Y."/>
            <person name="Subramanian S."/>
            <person name="Tabor P.E."/>
            <person name="Verduzco D."/>
            <person name="Waldron L."/>
            <person name="Wang J."/>
            <person name="Wang J."/>
            <person name="Wang Q."/>
            <person name="Williams G.A."/>
            <person name="Wong G.K.-S."/>
            <person name="Yao Z."/>
            <person name="Zhang J."/>
            <person name="Zhang X."/>
            <person name="Zhao G."/>
            <person name="Zhou J."/>
            <person name="Zhou Y."/>
            <person name="Nelson D."/>
            <person name="Lehrach H."/>
            <person name="Reinhardt R."/>
            <person name="Naylor S.L."/>
            <person name="Yang H."/>
            <person name="Olson M."/>
            <person name="Weinstock G."/>
            <person name="Gibbs R.A."/>
        </authorList>
    </citation>
    <scope>NUCLEOTIDE SEQUENCE [LARGE SCALE GENOMIC DNA]</scope>
</reference>
<reference key="15">
    <citation type="journal article" date="2004" name="Genome Res.">
        <title>The status, quality, and expansion of the NIH full-length cDNA project: the Mammalian Gene Collection (MGC).</title>
        <authorList>
            <consortium name="The MGC Project Team"/>
        </authorList>
    </citation>
    <scope>NUCLEOTIDE SEQUENCE [LARGE SCALE MRNA]</scope>
    <scope>VARIANT CYS-326</scope>
    <source>
        <tissue>Eye</tissue>
    </source>
</reference>
<reference key="16">
    <citation type="journal article" date="2000" name="Arch. Biochem. Biophys.">
        <title>The human OGG1 gene: structure, functions, and its implication in the process of carcinogenesis.</title>
        <authorList>
            <person name="Boiteux S."/>
            <person name="Radicella J.P."/>
        </authorList>
    </citation>
    <scope>REVIEW</scope>
</reference>
<reference key="17">
    <citation type="journal article" date="2007" name="J. Cell Sci.">
        <title>UVA irradiation induces relocalisation of the DNA repair protein hOGG1 to nuclear speckles.</title>
        <authorList>
            <person name="Campalans A."/>
            <person name="Amouroux R."/>
            <person name="Bravard A."/>
            <person name="Epe B."/>
            <person name="Radicella J.P."/>
        </authorList>
    </citation>
    <scope>SUBCELLULAR LOCATION</scope>
</reference>
<reference key="18">
    <citation type="journal article" date="2000" name="Nature">
        <title>Structural basis for recognition and repair of the endogenous mutagen 8-oxoguanine in DNA.</title>
        <authorList>
            <person name="Bruner S.D."/>
            <person name="Norman D.P.G."/>
            <person name="Verdine G.L."/>
        </authorList>
    </citation>
    <scope>X-RAY CRYSTALLOGRAPHY (2.1 ANGSTROMS) OF 12-327 OF MUTANT GLN-247 IN COMPLEX WITH DNA</scope>
    <scope>CHARACTERIZATION OF VARIANT HIS-154</scope>
</reference>
<reference key="19">
    <citation type="journal article" date="2002" name="J. Mol. Biol.">
        <title>Reciprocal 'flipping'; underlies substrate recognition and catalytic activation by the human 8-oxo-guanine DNA glycosylase.</title>
        <authorList>
            <person name="Bjoras M."/>
            <person name="Seeberg E."/>
            <person name="Luna L."/>
            <person name="Pearl L.H."/>
            <person name="Barrett T.E."/>
        </authorList>
    </citation>
    <scope>X-RAY CRYSTALLOGRAPHY (2.15 ANGSTROMS) IN COMPLEX WITH DNA AND 8-OXO-GUANINE</scope>
</reference>
<reference key="20">
    <citation type="journal article" date="2003" name="Biochemistry">
        <title>Structural and biochemical exploration of a critical amino acid in human 8-oxoguanine glycosylase.</title>
        <authorList>
            <person name="Norman D.P.G."/>
            <person name="Chung S.J."/>
            <person name="Verdine G.L."/>
        </authorList>
    </citation>
    <scope>X-RAY CRYSTALLOGRAPHY (2.2 ANGSTROMS) OF 12-327 OF MUTANTS ASN-268; GLU-268 AND GLN-268 IN COMPLEX WITH DNA</scope>
    <scope>MUTAGENESIS OF ASP-268</scope>
</reference>
<reference key="21">
    <citation type="journal article" date="2003" name="Nat. Struct. Biol.">
        <title>Product-assisted catalysis in base-excision DNA repair.</title>
        <authorList>
            <person name="Fromme J.C."/>
            <person name="Bruner S.D."/>
            <person name="Yang W."/>
            <person name="Karplus M."/>
            <person name="Verdine G.L."/>
        </authorList>
    </citation>
    <scope>X-RAY CRYSTALLOGRAPHY (2.35 ANGSTROMS) OF 12-327 IN COMPLEX WITH DNA AND 8-OXO-GUANINE</scope>
</reference>
<reference key="22">
    <citation type="journal article" date="2004" name="Chem. Biol.">
        <title>Structures of end products resulting from lesion processing by a DNA glycosylase/lyase.</title>
        <authorList>
            <person name="Chung S.J."/>
            <person name="Verdine G.L."/>
        </authorList>
    </citation>
    <scope>X-RAY CRYSTALLOGRAPHY (1.9 ANGSTROMS) OF 12-325 OF MUTANT GLU-268 IN COMPLEX WITH DNA</scope>
</reference>
<reference key="23">
    <citation type="journal article" date="2007" name="J. Biol. Chem.">
        <title>Structural characterization of human 8-oxoguanine DNA glycosylase variants bearing active site mutations.</title>
        <authorList>
            <person name="Radom C.T."/>
            <person name="Banerjee A."/>
            <person name="Verdine G.L."/>
        </authorList>
    </citation>
    <scope>X-RAY CRYSTALLOGRAPHY (2.57 ANGSTROMS) OF 12-327 OF MUTANTS ALA-42/ALA-270/ALA-315/PHE-315 IN COMPLEXES WITH DNA</scope>
</reference>
<reference key="24">
    <citation type="journal article" date="1998" name="Jpn. J. Cancer Res.">
        <title>Infrequent mutations of the hOGG1 gene, that is involved in the excision of 8-hydroxyguanine in damaged DNA, in human gastric cancer.</title>
        <authorList>
            <person name="Shinmura K."/>
            <person name="Kohno T."/>
            <person name="Kasai H."/>
            <person name="Koda K."/>
            <person name="Sugimura H."/>
            <person name="Yokota J."/>
        </authorList>
    </citation>
    <scope>VARIANT HIS-154</scope>
</reference>
<reference key="25">
    <citation type="journal article" date="1998" name="Oncogene">
        <title>Mutations in OGG1, a gene involved in the repair of oxidative DNA damage, are found in human lung and kidney tumours.</title>
        <authorList>
            <person name="Chevillard S."/>
            <person name="Radicella J.P."/>
            <person name="Levalois C."/>
            <person name="Lebeau J."/>
            <person name="Poupon M.-F."/>
            <person name="Oudard S."/>
            <person name="Dutrillaux B."/>
            <person name="Boiteux S."/>
        </authorList>
    </citation>
    <scope>VARIANTS SER-85; GLN-131 AND THR-232</scope>
    <scope>CHARACTERIZATION OF VARIANT GLN-131</scope>
</reference>
<reference key="26">
    <citation type="journal article" date="1999" name="Nucleic Acids Res.">
        <title>Excision of oxidatively damaged DNA bases by the human alpha-hOgg1 protein and the polymorphic alpha-hOgg1(Ser326Cys) protein which is frequently found in human populations.</title>
        <authorList>
            <person name="Dherin C."/>
            <person name="Radicella J.P."/>
            <person name="Dizdaroglu M."/>
            <person name="Boiteux S."/>
        </authorList>
    </citation>
    <scope>CHARACTERIZATION OF VARIANT CYS-326</scope>
</reference>
<reference key="27">
    <citation type="journal article" date="2000" name="Nucleic Acids Res.">
        <title>Effect of single mutations in the OGG1 gene found in human tumors on the substrate specificity of the ogg1 protein.</title>
        <authorList>
            <person name="Audebert M."/>
            <person name="Radicella J.P."/>
            <person name="Dizdaroglu M."/>
        </authorList>
    </citation>
    <scope>CHARACTERIZATION OF VARIANTS GLN-46 AND HIS-154</scope>
</reference>
<reference key="28">
    <citation type="journal article" date="2002" name="DNA Repair">
        <title>Mitochondrial targeting of human 8-oxoguanine DNA glycosylase hOGG1 is impaired by a somatic mutation found in kidney cancer.</title>
        <authorList>
            <person name="Audebert M."/>
            <person name="Charbonnier J.-B."/>
            <person name="Boiteux S."/>
            <person name="Radicella J.P."/>
        </authorList>
    </citation>
    <scope>CHARACTERIZATION OF VARIANT GLU-12</scope>
</reference>
<comment type="function">
    <text>DNA repair enzyme that incises DNA at 8-oxoG residues. Excises 7,8-dihydro-8-oxoguanine and 2,6-diamino-4-hydroxy-5-N-methylformamidopyrimidine (FAPY) from damaged DNA. Has a beta-lyase activity that nicks DNA 3' to the lesion.</text>
</comment>
<comment type="catalytic activity">
    <reaction>
        <text>2'-deoxyribonucleotide-(2'-deoxyribose 5'-phosphate)-2'-deoxyribonucleotide-DNA = a 3'-end 2'-deoxyribonucleotide-(2,3-dehydro-2,3-deoxyribose 5'-phosphate)-DNA + a 5'-end 5'-phospho-2'-deoxyribonucleoside-DNA + H(+)</text>
        <dbReference type="Rhea" id="RHEA:66592"/>
        <dbReference type="Rhea" id="RHEA-COMP:13180"/>
        <dbReference type="Rhea" id="RHEA-COMP:16897"/>
        <dbReference type="Rhea" id="RHEA-COMP:17067"/>
        <dbReference type="ChEBI" id="CHEBI:15378"/>
        <dbReference type="ChEBI" id="CHEBI:136412"/>
        <dbReference type="ChEBI" id="CHEBI:157695"/>
        <dbReference type="ChEBI" id="CHEBI:167181"/>
        <dbReference type="EC" id="4.2.99.18"/>
    </reaction>
</comment>
<comment type="subcellular location">
    <subcellularLocation>
        <location evidence="12">Nucleus</location>
        <location evidence="12">Nucleoplasm</location>
    </subcellularLocation>
    <subcellularLocation>
        <location evidence="12">Nucleus speckle</location>
    </subcellularLocation>
    <subcellularLocation>
        <location evidence="12">Nucleus matrix</location>
    </subcellularLocation>
    <text>Together with APEX1 is recruited to nuclear speckles in UVA-irradiated cells.</text>
</comment>
<comment type="subcellular location">
    <molecule>Isoform 1A</molecule>
    <subcellularLocation>
        <location>Nucleus</location>
    </subcellularLocation>
</comment>
<comment type="subcellular location">
    <molecule>Isoform 2A</molecule>
    <subcellularLocation>
        <location>Mitochondrion</location>
    </subcellularLocation>
</comment>
<comment type="alternative products">
    <event type="alternative splicing"/>
    <isoform>
        <id>O15527-1</id>
        <name>1A</name>
        <name>Alpha</name>
        <sequence type="displayed"/>
    </isoform>
    <isoform>
        <id>O15527-2</id>
        <name>1B</name>
        <sequence type="described" ref="VSP_003746"/>
    </isoform>
    <isoform>
        <id>O15527-3</id>
        <name>1C</name>
        <sequence type="described" ref="VSP_003747"/>
    </isoform>
    <isoform>
        <id>O15527-4</id>
        <name>2A</name>
        <name>Beta</name>
        <sequence type="described" ref="VSP_003748"/>
    </isoform>
    <isoform>
        <id>O15527-5</id>
        <name>2B</name>
        <sequence type="described" ref="VSP_003749"/>
    </isoform>
    <isoform>
        <id>O15527-6</id>
        <name>2C</name>
        <sequence type="described" ref="VSP_003750 VSP_003751"/>
    </isoform>
    <isoform>
        <id>O15527-7</id>
        <name>2D</name>
        <sequence type="described" ref="VSP_003752"/>
    </isoform>
    <isoform>
        <id>O15527-8</id>
        <name>2E</name>
        <sequence type="described" ref="VSP_003753"/>
    </isoform>
</comment>
<comment type="tissue specificity">
    <text>Ubiquitous.</text>
</comment>
<comment type="disease">
    <disease id="DI-02254">
        <name>Renal cell carcinoma</name>
        <acronym>RCC</acronym>
        <description>Renal cell carcinoma is a heterogeneous group of sporadic or hereditary carcinoma derived from cells of the proximal renal tubular epithelium. It is subclassified into clear cell renal carcinoma (non-papillary carcinoma), papillary renal cell carcinoma, chromophobe renal cell carcinoma, collecting duct carcinoma with medullary carcinoma of the kidney, and unclassified renal cell carcinoma. Clear cell renal cell carcinoma is the most common subtype.</description>
        <dbReference type="MIM" id="144700"/>
    </disease>
    <text>The disease may be caused by variants affecting the gene represented in this entry.</text>
</comment>
<comment type="similarity">
    <text evidence="19">Belongs to the type-1 OGG1 family.</text>
</comment>
<comment type="sequence caution" evidence="19">
    <conflict type="erroneous initiation">
        <sequence resource="EMBL-CDS" id="AAB84013"/>
    </conflict>
    <text>Truncated N-terminus.</text>
</comment>
<sequence length="345" mass="38782">MPARALLPRRMGHRTLASTPALWASIPCPRSELRLDLVLPSGQSFRWREQSPAHWSGVLADQVWTLTQTEEQLHCTVYRGDKSQASRPTPDELEAVRKYFQLDVTLAQLYHHWGSVDSHFQEVAQKFQGVRLLRQDPIECLFSFICSSNNNIARITGMVERLCQAFGPRLIQLDDVTYHGFPSLQALAGPEVEAHLRKLGLGYRARYVSASARAILEEQGGLAWLQQLRESSYEEAHKALCILPGVGTKVADCICLMALDKPQAVPVDVHMWHIAQRDYSWHPTTSQAKGPSPQTNKELGNFFRSLWGPYAGWAQAVLFSADLRQSRHAQEPPAKRRKGSKGPEG</sequence>
<gene>
    <name type="primary">OGG1</name>
    <name type="synonym">MMH</name>
    <name type="synonym">MUTM</name>
    <name type="synonym">OGH1</name>
</gene>
<accession>O15527</accession>
<accession>A8K1E3</accession>
<accession>O00390</accession>
<accession>O00670</accession>
<accession>O00705</accession>
<accession>O14876</accession>
<accession>O95488</accession>
<accession>P78554</accession>
<accession>Q9BW42</accession>
<accession>Q9UIK0</accession>
<accession>Q9UIK1</accession>
<accession>Q9UIK2</accession>
<accession>Q9UL34</accession>
<accession>Q9Y2C0</accession>
<accession>Q9Y2C1</accession>
<accession>Q9Y6C3</accession>
<accession>Q9Y6C4</accession>
<organism>
    <name type="scientific">Homo sapiens</name>
    <name type="common">Human</name>
    <dbReference type="NCBI Taxonomy" id="9606"/>
    <lineage>
        <taxon>Eukaryota</taxon>
        <taxon>Metazoa</taxon>
        <taxon>Chordata</taxon>
        <taxon>Craniata</taxon>
        <taxon>Vertebrata</taxon>
        <taxon>Euteleostomi</taxon>
        <taxon>Mammalia</taxon>
        <taxon>Eutheria</taxon>
        <taxon>Euarchontoglires</taxon>
        <taxon>Primates</taxon>
        <taxon>Haplorrhini</taxon>
        <taxon>Catarrhini</taxon>
        <taxon>Hominidae</taxon>
        <taxon>Homo</taxon>
    </lineage>
</organism>